<dbReference type="EC" id="5.4.99.1" evidence="1"/>
<dbReference type="EMBL" id="X80997">
    <property type="protein sequence ID" value="CAA56921.1"/>
    <property type="molecule type" value="Genomic_DNA"/>
</dbReference>
<dbReference type="EMBL" id="X75890">
    <property type="protein sequence ID" value="CAA53484.1"/>
    <property type="molecule type" value="Genomic_DNA"/>
</dbReference>
<dbReference type="PIR" id="I40658">
    <property type="entry name" value="I40658"/>
</dbReference>
<dbReference type="PDB" id="1B1A">
    <property type="method" value="NMR"/>
    <property type="chains" value="A=1-137"/>
</dbReference>
<dbReference type="PDB" id="1CB7">
    <property type="method" value="X-ray"/>
    <property type="resolution" value="2.00 A"/>
    <property type="chains" value="A/C=1-137"/>
</dbReference>
<dbReference type="PDB" id="1CCW">
    <property type="method" value="X-ray"/>
    <property type="resolution" value="1.60 A"/>
    <property type="chains" value="A/C=1-137"/>
</dbReference>
<dbReference type="PDB" id="1I9C">
    <property type="method" value="X-ray"/>
    <property type="resolution" value="1.90 A"/>
    <property type="chains" value="A/C=1-137"/>
</dbReference>
<dbReference type="PDB" id="6H9E">
    <property type="method" value="X-ray"/>
    <property type="resolution" value="1.82 A"/>
    <property type="chains" value="A/C=1-137"/>
</dbReference>
<dbReference type="PDB" id="6H9F">
    <property type="method" value="X-ray"/>
    <property type="resolution" value="2.10 A"/>
    <property type="chains" value="A/C=1-137"/>
</dbReference>
<dbReference type="PDBsum" id="1B1A"/>
<dbReference type="PDBsum" id="1CB7"/>
<dbReference type="PDBsum" id="1CCW"/>
<dbReference type="PDBsum" id="1I9C"/>
<dbReference type="PDBsum" id="6H9E"/>
<dbReference type="PDBsum" id="6H9F"/>
<dbReference type="SMR" id="P80078"/>
<dbReference type="IntAct" id="P80078">
    <property type="interactions" value="1"/>
</dbReference>
<dbReference type="STRING" id="1494.SAMN05216497_1183"/>
<dbReference type="BRENDA" id="5.4.99.1">
    <property type="organism ID" value="1471"/>
</dbReference>
<dbReference type="SABIO-RK" id="P80078"/>
<dbReference type="UniPathway" id="UPA00561">
    <property type="reaction ID" value="UER00617"/>
</dbReference>
<dbReference type="EvolutionaryTrace" id="P80078"/>
<dbReference type="GO" id="GO:0031419">
    <property type="term" value="F:cobalamin binding"/>
    <property type="evidence" value="ECO:0007669"/>
    <property type="project" value="UniProtKB-KW"/>
</dbReference>
<dbReference type="GO" id="GO:0046872">
    <property type="term" value="F:metal ion binding"/>
    <property type="evidence" value="ECO:0007669"/>
    <property type="project" value="UniProtKB-KW"/>
</dbReference>
<dbReference type="GO" id="GO:0050097">
    <property type="term" value="F:methylaspartate mutase activity"/>
    <property type="evidence" value="ECO:0007669"/>
    <property type="project" value="UniProtKB-UniRule"/>
</dbReference>
<dbReference type="GO" id="GO:0019670">
    <property type="term" value="P:anaerobic glutamate catabolic process"/>
    <property type="evidence" value="ECO:0007669"/>
    <property type="project" value="InterPro"/>
</dbReference>
<dbReference type="GO" id="GO:0019553">
    <property type="term" value="P:glutamate catabolic process via L-citramalate"/>
    <property type="evidence" value="ECO:0007669"/>
    <property type="project" value="UniProtKB-UniRule"/>
</dbReference>
<dbReference type="CDD" id="cd02072">
    <property type="entry name" value="Glm_B12_BD"/>
    <property type="match status" value="1"/>
</dbReference>
<dbReference type="Gene3D" id="3.40.50.280">
    <property type="entry name" value="Cobalamin-binding domain"/>
    <property type="match status" value="1"/>
</dbReference>
<dbReference type="HAMAP" id="MF_00526">
    <property type="entry name" value="Me_Asp_mutase_S"/>
    <property type="match status" value="1"/>
</dbReference>
<dbReference type="InterPro" id="IPR006158">
    <property type="entry name" value="Cobalamin-bd"/>
</dbReference>
<dbReference type="InterPro" id="IPR036724">
    <property type="entry name" value="Cobalamin-bd_sf"/>
</dbReference>
<dbReference type="InterPro" id="IPR006394">
    <property type="entry name" value="GlmS"/>
</dbReference>
<dbReference type="NCBIfam" id="TIGR01501">
    <property type="entry name" value="MthylAspMutase"/>
    <property type="match status" value="1"/>
</dbReference>
<dbReference type="NCBIfam" id="NF002612">
    <property type="entry name" value="PRK02261.1"/>
    <property type="match status" value="1"/>
</dbReference>
<dbReference type="Pfam" id="PF02310">
    <property type="entry name" value="B12-binding"/>
    <property type="match status" value="1"/>
</dbReference>
<dbReference type="SUPFAM" id="SSF52242">
    <property type="entry name" value="Cobalamin (vitamin B12)-binding domain"/>
    <property type="match status" value="1"/>
</dbReference>
<dbReference type="PROSITE" id="PS51332">
    <property type="entry name" value="B12_BINDING"/>
    <property type="match status" value="1"/>
</dbReference>
<keyword id="KW-0002">3D-structure</keyword>
<keyword id="KW-0846">Cobalamin</keyword>
<keyword id="KW-0170">Cobalt</keyword>
<keyword id="KW-0903">Direct protein sequencing</keyword>
<keyword id="KW-0413">Isomerase</keyword>
<keyword id="KW-0479">Metal-binding</keyword>
<proteinExistence type="evidence at protein level"/>
<sequence length="137" mass="14812">MEKKTIVLGVIGSDCHAVGNKILDHAFTNAGFNVVNIGVLSPQEVFIKAAIETKADAILLSSLYGQGEIDCKGLRQKCDEAGLEGILLYVGGNIVVGKQHWPDVEKRFKDMGYDRVYAPGTPPEVGIADLKKDLNIE</sequence>
<name>GMSS_CLOCO</name>
<organism>
    <name type="scientific">Clostridium cochlearium</name>
    <dbReference type="NCBI Taxonomy" id="1494"/>
    <lineage>
        <taxon>Bacteria</taxon>
        <taxon>Bacillati</taxon>
        <taxon>Bacillota</taxon>
        <taxon>Clostridia</taxon>
        <taxon>Eubacteriales</taxon>
        <taxon>Clostridiaceae</taxon>
        <taxon>Clostridium</taxon>
    </lineage>
</organism>
<accession>P80078</accession>
<accession>Q60144</accession>
<gene>
    <name evidence="1" type="primary">glmS</name>
</gene>
<protein>
    <recommendedName>
        <fullName evidence="1">Glutamate mutase sigma subunit</fullName>
        <ecNumber evidence="1">5.4.99.1</ecNumber>
    </recommendedName>
    <alternativeName>
        <fullName evidence="1">Glutamate mutase S chain</fullName>
    </alternativeName>
    <alternativeName>
        <fullName evidence="1">Glutamate mutase small subunit</fullName>
    </alternativeName>
    <alternativeName>
        <fullName evidence="1">Methylaspartate mutase</fullName>
    </alternativeName>
</protein>
<feature type="chain" id="PRO_0000216443" description="Glutamate mutase sigma subunit">
    <location>
        <begin position="1"/>
        <end position="137"/>
    </location>
</feature>
<feature type="domain" description="B12-binding" evidence="1">
    <location>
        <begin position="3"/>
        <end position="137"/>
    </location>
</feature>
<feature type="binding site">
    <location>
        <begin position="13"/>
        <end position="17"/>
    </location>
    <ligand>
        <name>adenosylcob(III)alamin</name>
        <dbReference type="ChEBI" id="CHEBI:18408"/>
    </ligand>
</feature>
<feature type="binding site" description="axial binding residue">
    <location>
        <position position="16"/>
    </location>
    <ligand>
        <name>adenosylcob(III)alamin</name>
        <dbReference type="ChEBI" id="CHEBI:18408"/>
    </ligand>
    <ligandPart>
        <name>Co</name>
        <dbReference type="ChEBI" id="CHEBI:27638"/>
    </ligandPart>
</feature>
<feature type="binding site">
    <location>
        <begin position="61"/>
        <end position="63"/>
    </location>
    <ligand>
        <name>adenosylcob(III)alamin</name>
        <dbReference type="ChEBI" id="CHEBI:18408"/>
    </ligand>
</feature>
<feature type="binding site">
    <location>
        <begin position="93"/>
        <end position="97"/>
    </location>
    <ligand>
        <name>adenosylcob(III)alamin</name>
        <dbReference type="ChEBI" id="CHEBI:18408"/>
    </ligand>
</feature>
<feature type="strand" evidence="7">
    <location>
        <begin position="5"/>
        <end position="11"/>
    </location>
</feature>
<feature type="helix" evidence="7">
    <location>
        <begin position="18"/>
        <end position="29"/>
    </location>
</feature>
<feature type="strand" evidence="7">
    <location>
        <begin position="33"/>
        <end position="41"/>
    </location>
</feature>
<feature type="helix" evidence="7">
    <location>
        <begin position="43"/>
        <end position="53"/>
    </location>
</feature>
<feature type="strand" evidence="7">
    <location>
        <begin position="56"/>
        <end position="62"/>
    </location>
</feature>
<feature type="helix" evidence="7">
    <location>
        <begin position="67"/>
        <end position="71"/>
    </location>
</feature>
<feature type="helix" evidence="7">
    <location>
        <begin position="74"/>
        <end position="80"/>
    </location>
</feature>
<feature type="strand" evidence="7">
    <location>
        <begin position="87"/>
        <end position="93"/>
    </location>
</feature>
<feature type="strand" evidence="7">
    <location>
        <begin position="95"/>
        <end position="98"/>
    </location>
</feature>
<feature type="helix" evidence="7">
    <location>
        <begin position="101"/>
        <end position="110"/>
    </location>
</feature>
<feature type="strand" evidence="7">
    <location>
        <begin position="114"/>
        <end position="116"/>
    </location>
</feature>
<feature type="helix" evidence="7">
    <location>
        <begin position="123"/>
        <end position="134"/>
    </location>
</feature>
<comment type="function">
    <text evidence="1 4 5 6">Catalyzes the carbon skeleton rearrangement of L-glutamate to L-threo-3-methylaspartate ((2S,3S)-3-methylaspartate).</text>
</comment>
<comment type="catalytic activity">
    <reaction evidence="1 5 6">
        <text>(2S,3S)-3-methyl-L-aspartate = L-glutamate</text>
        <dbReference type="Rhea" id="RHEA:12857"/>
        <dbReference type="ChEBI" id="CHEBI:29985"/>
        <dbReference type="ChEBI" id="CHEBI:58724"/>
        <dbReference type="EC" id="5.4.99.1"/>
    </reaction>
</comment>
<comment type="cofactor">
    <cofactor evidence="1 2 3 4 5 6">
        <name>adenosylcob(III)alamin</name>
        <dbReference type="ChEBI" id="CHEBI:18408"/>
    </cofactor>
</comment>
<comment type="activity regulation">
    <text evidence="4 5">Competitively inhibited by (2S,4S)-4-fluoroglutamate, 2-methyleneglutarate, (2R,3RS)-3-fluoroglutamate and (S)-3-methylitaconate.</text>
</comment>
<comment type="pathway">
    <text evidence="1">Amino-acid degradation; L-glutamate degradation via mesaconate pathway; acetate and pyruvate from L-glutamate: step 1/4.</text>
</comment>
<comment type="subunit">
    <text evidence="1 2 3 4 5 6">Heterotetramer composed of 2 epsilon subunits (GlmE) and 2 sigma subunits (GlmS). GlmE exists as a homodimer and GlmS as a monomer.</text>
</comment>
<comment type="interaction">
    <interactant intactId="EBI-1028147">
        <id>P80078</id>
    </interactant>
    <interactant intactId="EBI-1028142">
        <id>P80077</id>
        <label>glmE</label>
    </interactant>
    <organismsDiffer>false</organismsDiffer>
    <experiments>2</experiments>
</comment>
<comment type="similarity">
    <text evidence="1">Belongs to the methylaspartate mutase GlmS subunit family.</text>
</comment>
<reference key="1">
    <citation type="journal article" date="1994" name="Eur. J. Biochem.">
        <title>Characterization of the coenzyme-B12-dependent glutamate mutase from Clostridium cochlearium produced in Escherichia coli.</title>
        <authorList>
            <person name="Zelder O."/>
            <person name="Beatrix B."/>
            <person name="Leutbecher U."/>
            <person name="Buckel W."/>
        </authorList>
    </citation>
    <scope>NUCLEOTIDE SEQUENCE [GENOMIC DNA]</scope>
    <scope>FUNCTION</scope>
    <scope>CATALYTIC ACTIVITY</scope>
    <scope>ACTIVITY REGULATION</scope>
    <scope>COFACTOR</scope>
    <scope>SUBUNIT</scope>
    <source>
        <strain>ATCC 17787 / DSM 1285 / NCIB 10633</strain>
    </source>
</reference>
<reference key="2">
    <citation type="journal article" date="1994" name="FEMS Microbiol. Lett.">
        <title>Cloning, sequencing and expression in Escherichia coli of the gene encoding component S of the coenzyme B12-dependent glutamate mutase from Clostridium cochlearium.</title>
        <authorList>
            <person name="Zelder O."/>
            <person name="Beatrix B."/>
            <person name="Buckel W."/>
        </authorList>
    </citation>
    <scope>NUCLEOTIDE SEQUENCE [GENOMIC DNA]</scope>
    <scope>FUNCTION</scope>
    <scope>CATALYTIC ACTIVITY</scope>
    <scope>COFACTOR</scope>
    <scope>SUBUNIT</scope>
    <source>
        <strain>ATCC 17787 / DSM 1285 / NCIB 10633</strain>
    </source>
</reference>
<reference key="3">
    <citation type="journal article" date="1992" name="Eur. J. Biochem.">
        <title>Glutamate mutase from Clostridium cochlearium. Purification, cobamide content and stereospecific inhibitors.</title>
        <authorList>
            <person name="Leutbecher U."/>
            <person name="Boecher R."/>
            <person name="Linder D."/>
            <person name="Buckel W."/>
        </authorList>
    </citation>
    <scope>PROTEIN SEQUENCE OF 1-23</scope>
    <scope>FUNCTION</scope>
    <scope>ACTIVITY REGULATION</scope>
    <scope>COFACTOR</scope>
    <scope>SUBUNIT</scope>
    <source>
        <strain>ATCC 17787 / DSM 1285 / NCIB 10633</strain>
    </source>
</reference>
<reference key="4">
    <citation type="journal article" date="1999" name="Eur. J. Biochem.">
        <title>Structure and dynamics of the B12-binding subunit of glutamate mutase from Clostridium cochlearium.</title>
        <authorList>
            <person name="Hoffmann B."/>
            <person name="Konrat R."/>
            <person name="Bothe H."/>
            <person name="Buckel W."/>
            <person name="Krautler B."/>
        </authorList>
    </citation>
    <scope>STRUCTURE BY NMR</scope>
</reference>
<reference key="5">
    <citation type="journal article" date="1999" name="Structure">
        <title>Glutamate mutase from Clostridium cochlearium: the structure of a coenzyme B12-dependent enzyme provides new mechanistic insights.</title>
        <authorList>
            <person name="Reitzer R."/>
            <person name="Gruber K."/>
            <person name="Jogl G."/>
            <person name="Wagner U.G."/>
            <person name="Bothe H."/>
            <person name="Buckel W."/>
            <person name="Kratky C."/>
        </authorList>
    </citation>
    <scope>X-RAY CRYSTALLOGRAPHY (1.6 ANGSTROMS) IN COMPLEX WITH COBALAMIN ANALOGS</scope>
    <scope>COFACTOR</scope>
    <scope>SUBUNIT</scope>
    <source>
        <strain>ATCC 17787 / DSM 1285 / NCIB 10633</strain>
    </source>
</reference>
<reference key="6">
    <citation type="journal article" date="2001" name="Angew. Chem. Int. Ed. Engl.">
        <title>Radical shuttling in a protein: ribose pseudorotation controls alkyl-radical transfer in the coenzyme B(12) dependent enzyme glutamate mutase.</title>
        <authorList>
            <person name="Gruber K."/>
            <person name="Reitzer R."/>
            <person name="Kratky C."/>
        </authorList>
    </citation>
    <scope>X-RAY CRYSTALLOGRAPHY (1.90 ANGSTROMS) IN COMPLEX WITH COBALAMIN ANALOGS AND SUBSTRATE</scope>
    <scope>COFACTOR</scope>
    <scope>SUBUNIT</scope>
</reference>
<evidence type="ECO:0000255" key="1">
    <source>
        <dbReference type="HAMAP-Rule" id="MF_00526"/>
    </source>
</evidence>
<evidence type="ECO:0000269" key="2">
    <source>
    </source>
</evidence>
<evidence type="ECO:0000269" key="3">
    <source>
    </source>
</evidence>
<evidence type="ECO:0000269" key="4">
    <source>
    </source>
</evidence>
<evidence type="ECO:0000269" key="5">
    <source>
    </source>
</evidence>
<evidence type="ECO:0000269" key="6">
    <source>
    </source>
</evidence>
<evidence type="ECO:0007829" key="7">
    <source>
        <dbReference type="PDB" id="1CCW"/>
    </source>
</evidence>